<dbReference type="EMBL" id="AP009178">
    <property type="protein sequence ID" value="BAF69221.1"/>
    <property type="molecule type" value="Genomic_DNA"/>
</dbReference>
<dbReference type="RefSeq" id="WP_011979647.1">
    <property type="nucleotide sequence ID" value="NC_009662.1"/>
</dbReference>
<dbReference type="SMR" id="A6Q162"/>
<dbReference type="FunCoup" id="A6Q162">
    <property type="interactions" value="398"/>
</dbReference>
<dbReference type="STRING" id="387092.NIS_0104"/>
<dbReference type="KEGG" id="nis:NIS_0104"/>
<dbReference type="eggNOG" id="COG0216">
    <property type="taxonomic scope" value="Bacteria"/>
</dbReference>
<dbReference type="HOGENOM" id="CLU_036856_0_1_7"/>
<dbReference type="InParanoid" id="A6Q162"/>
<dbReference type="OrthoDB" id="9806673at2"/>
<dbReference type="Proteomes" id="UP000001118">
    <property type="component" value="Chromosome"/>
</dbReference>
<dbReference type="GO" id="GO:0005737">
    <property type="term" value="C:cytoplasm"/>
    <property type="evidence" value="ECO:0007669"/>
    <property type="project" value="UniProtKB-SubCell"/>
</dbReference>
<dbReference type="GO" id="GO:0016149">
    <property type="term" value="F:translation release factor activity, codon specific"/>
    <property type="evidence" value="ECO:0007669"/>
    <property type="project" value="UniProtKB-UniRule"/>
</dbReference>
<dbReference type="FunFam" id="3.30.160.20:FF:000004">
    <property type="entry name" value="Peptide chain release factor 1"/>
    <property type="match status" value="1"/>
</dbReference>
<dbReference type="FunFam" id="3.30.70.1660:FF:000002">
    <property type="entry name" value="Peptide chain release factor 1"/>
    <property type="match status" value="1"/>
</dbReference>
<dbReference type="FunFam" id="3.30.70.1660:FF:000004">
    <property type="entry name" value="Peptide chain release factor 1"/>
    <property type="match status" value="1"/>
</dbReference>
<dbReference type="Gene3D" id="3.30.160.20">
    <property type="match status" value="1"/>
</dbReference>
<dbReference type="Gene3D" id="3.30.70.1660">
    <property type="match status" value="2"/>
</dbReference>
<dbReference type="Gene3D" id="6.10.140.1950">
    <property type="match status" value="1"/>
</dbReference>
<dbReference type="HAMAP" id="MF_00093">
    <property type="entry name" value="Rel_fac_1"/>
    <property type="match status" value="1"/>
</dbReference>
<dbReference type="InterPro" id="IPR005139">
    <property type="entry name" value="PCRF"/>
</dbReference>
<dbReference type="InterPro" id="IPR000352">
    <property type="entry name" value="Pep_chain_release_fac_I"/>
</dbReference>
<dbReference type="InterPro" id="IPR045853">
    <property type="entry name" value="Pep_chain_release_fac_I_sf"/>
</dbReference>
<dbReference type="InterPro" id="IPR050057">
    <property type="entry name" value="Prokaryotic/Mito_RF"/>
</dbReference>
<dbReference type="InterPro" id="IPR004373">
    <property type="entry name" value="RF-1"/>
</dbReference>
<dbReference type="NCBIfam" id="TIGR00019">
    <property type="entry name" value="prfA"/>
    <property type="match status" value="1"/>
</dbReference>
<dbReference type="NCBIfam" id="NF001859">
    <property type="entry name" value="PRK00591.1"/>
    <property type="match status" value="1"/>
</dbReference>
<dbReference type="PANTHER" id="PTHR43804">
    <property type="entry name" value="LD18447P"/>
    <property type="match status" value="1"/>
</dbReference>
<dbReference type="PANTHER" id="PTHR43804:SF7">
    <property type="entry name" value="LD18447P"/>
    <property type="match status" value="1"/>
</dbReference>
<dbReference type="Pfam" id="PF03462">
    <property type="entry name" value="PCRF"/>
    <property type="match status" value="1"/>
</dbReference>
<dbReference type="Pfam" id="PF00472">
    <property type="entry name" value="RF-1"/>
    <property type="match status" value="1"/>
</dbReference>
<dbReference type="SMART" id="SM00937">
    <property type="entry name" value="PCRF"/>
    <property type="match status" value="1"/>
</dbReference>
<dbReference type="SUPFAM" id="SSF75620">
    <property type="entry name" value="Release factor"/>
    <property type="match status" value="1"/>
</dbReference>
<dbReference type="PROSITE" id="PS00745">
    <property type="entry name" value="RF_PROK_I"/>
    <property type="match status" value="1"/>
</dbReference>
<sequence length="354" mass="40360">MLKEKLHPFIQRYNEINELLSSPEITQDIKKMTALSKEQSEIEPIVEKAKEYMNILEAIEENRSLIEDEELGELAKEELKELEPKKEQLEEEIKVLLISKDPNDEKDIYLEIRAGTGGEEAALFASDLFKAYARYAEKKGWRVEIVSSSESDSGGYKEIIAKIKGQGVYSRLKYEAGTHRVQRVPETESQGRIHTSAVTVAIMPEVDDVDVEINPNDLKIDVYRSSGHGGQSVNTTDSAVRITHIPTGIVVAMQDEKSQHKNKEKALKILKARIFEKRMREQQEALAKDRKEQVGSGDRSERIRTYNFPQNRVTDHRIGLTLYKLEEVMQGDLDQIIEPLIAHYQAQKIQEAGL</sequence>
<name>RF1_NITSB</name>
<proteinExistence type="inferred from homology"/>
<evidence type="ECO:0000255" key="1">
    <source>
        <dbReference type="HAMAP-Rule" id="MF_00093"/>
    </source>
</evidence>
<evidence type="ECO:0000256" key="2">
    <source>
        <dbReference type="SAM" id="MobiDB-lite"/>
    </source>
</evidence>
<organism>
    <name type="scientific">Nitratiruptor sp. (strain SB155-2)</name>
    <dbReference type="NCBI Taxonomy" id="387092"/>
    <lineage>
        <taxon>Bacteria</taxon>
        <taxon>Pseudomonadati</taxon>
        <taxon>Campylobacterota</taxon>
        <taxon>Epsilonproteobacteria</taxon>
        <taxon>Nautiliales</taxon>
        <taxon>Nitratiruptoraceae</taxon>
        <taxon>Nitratiruptor</taxon>
    </lineage>
</organism>
<reference key="1">
    <citation type="journal article" date="2007" name="Proc. Natl. Acad. Sci. U.S.A.">
        <title>Deep-sea vent epsilon-proteobacterial genomes provide insights into emergence of pathogens.</title>
        <authorList>
            <person name="Nakagawa S."/>
            <person name="Takaki Y."/>
            <person name="Shimamura S."/>
            <person name="Reysenbach A.-L."/>
            <person name="Takai K."/>
            <person name="Horikoshi K."/>
        </authorList>
    </citation>
    <scope>NUCLEOTIDE SEQUENCE [LARGE SCALE GENOMIC DNA]</scope>
    <source>
        <strain>SB155-2</strain>
    </source>
</reference>
<protein>
    <recommendedName>
        <fullName evidence="1">Peptide chain release factor 1</fullName>
        <shortName evidence="1">RF-1</shortName>
    </recommendedName>
</protein>
<gene>
    <name evidence="1" type="primary">prfA</name>
    <name type="ordered locus">NIS_0104</name>
</gene>
<feature type="chain" id="PRO_1000004922" description="Peptide chain release factor 1">
    <location>
        <begin position="1"/>
        <end position="354"/>
    </location>
</feature>
<feature type="region of interest" description="Disordered" evidence="2">
    <location>
        <begin position="284"/>
        <end position="308"/>
    </location>
</feature>
<feature type="compositionally biased region" description="Basic and acidic residues" evidence="2">
    <location>
        <begin position="284"/>
        <end position="304"/>
    </location>
</feature>
<feature type="modified residue" description="N5-methylglutamine" evidence="1">
    <location>
        <position position="231"/>
    </location>
</feature>
<comment type="function">
    <text evidence="1">Peptide chain release factor 1 directs the termination of translation in response to the peptide chain termination codons UAG and UAA.</text>
</comment>
<comment type="subcellular location">
    <subcellularLocation>
        <location evidence="1">Cytoplasm</location>
    </subcellularLocation>
</comment>
<comment type="PTM">
    <text evidence="1">Methylated by PrmC. Methylation increases the termination efficiency of RF1.</text>
</comment>
<comment type="similarity">
    <text evidence="1">Belongs to the prokaryotic/mitochondrial release factor family.</text>
</comment>
<accession>A6Q162</accession>
<keyword id="KW-0963">Cytoplasm</keyword>
<keyword id="KW-0488">Methylation</keyword>
<keyword id="KW-0648">Protein biosynthesis</keyword>
<keyword id="KW-1185">Reference proteome</keyword>